<organism>
    <name type="scientific">Cupriavidus metallidurans (strain ATCC 43123 / DSM 2839 / NBRC 102507 / CH34)</name>
    <name type="common">Ralstonia metallidurans</name>
    <dbReference type="NCBI Taxonomy" id="266264"/>
    <lineage>
        <taxon>Bacteria</taxon>
        <taxon>Pseudomonadati</taxon>
        <taxon>Pseudomonadota</taxon>
        <taxon>Betaproteobacteria</taxon>
        <taxon>Burkholderiales</taxon>
        <taxon>Burkholderiaceae</taxon>
        <taxon>Cupriavidus</taxon>
    </lineage>
</organism>
<gene>
    <name evidence="1" type="primary">hslV</name>
    <name type="ordered locus">Rmet_0131</name>
</gene>
<evidence type="ECO:0000255" key="1">
    <source>
        <dbReference type="HAMAP-Rule" id="MF_00248"/>
    </source>
</evidence>
<dbReference type="EC" id="3.4.25.2" evidence="1"/>
<dbReference type="EMBL" id="CP000352">
    <property type="protein sequence ID" value="ABF07017.1"/>
    <property type="molecule type" value="Genomic_DNA"/>
</dbReference>
<dbReference type="RefSeq" id="WP_008642837.1">
    <property type="nucleotide sequence ID" value="NC_007973.1"/>
</dbReference>
<dbReference type="SMR" id="Q1LS59"/>
<dbReference type="STRING" id="266264.Rmet_0131"/>
<dbReference type="MEROPS" id="T01.006"/>
<dbReference type="GeneID" id="60822853"/>
<dbReference type="KEGG" id="rme:Rmet_0131"/>
<dbReference type="eggNOG" id="COG5405">
    <property type="taxonomic scope" value="Bacteria"/>
</dbReference>
<dbReference type="HOGENOM" id="CLU_093872_1_0_4"/>
<dbReference type="Proteomes" id="UP000002429">
    <property type="component" value="Chromosome"/>
</dbReference>
<dbReference type="GO" id="GO:0009376">
    <property type="term" value="C:HslUV protease complex"/>
    <property type="evidence" value="ECO:0007669"/>
    <property type="project" value="UniProtKB-UniRule"/>
</dbReference>
<dbReference type="GO" id="GO:0005839">
    <property type="term" value="C:proteasome core complex"/>
    <property type="evidence" value="ECO:0007669"/>
    <property type="project" value="InterPro"/>
</dbReference>
<dbReference type="GO" id="GO:0046872">
    <property type="term" value="F:metal ion binding"/>
    <property type="evidence" value="ECO:0007669"/>
    <property type="project" value="UniProtKB-KW"/>
</dbReference>
<dbReference type="GO" id="GO:0004298">
    <property type="term" value="F:threonine-type endopeptidase activity"/>
    <property type="evidence" value="ECO:0007669"/>
    <property type="project" value="UniProtKB-KW"/>
</dbReference>
<dbReference type="GO" id="GO:0051603">
    <property type="term" value="P:proteolysis involved in protein catabolic process"/>
    <property type="evidence" value="ECO:0007669"/>
    <property type="project" value="InterPro"/>
</dbReference>
<dbReference type="CDD" id="cd01913">
    <property type="entry name" value="protease_HslV"/>
    <property type="match status" value="1"/>
</dbReference>
<dbReference type="FunFam" id="3.60.20.10:FF:000002">
    <property type="entry name" value="ATP-dependent protease subunit HslV"/>
    <property type="match status" value="1"/>
</dbReference>
<dbReference type="Gene3D" id="3.60.20.10">
    <property type="entry name" value="Glutamine Phosphoribosylpyrophosphate, subunit 1, domain 1"/>
    <property type="match status" value="1"/>
</dbReference>
<dbReference type="HAMAP" id="MF_00248">
    <property type="entry name" value="HslV"/>
    <property type="match status" value="1"/>
</dbReference>
<dbReference type="InterPro" id="IPR022281">
    <property type="entry name" value="ATP-dep_Prtase_HsIV_su"/>
</dbReference>
<dbReference type="InterPro" id="IPR029055">
    <property type="entry name" value="Ntn_hydrolases_N"/>
</dbReference>
<dbReference type="InterPro" id="IPR001353">
    <property type="entry name" value="Proteasome_sua/b"/>
</dbReference>
<dbReference type="InterPro" id="IPR023333">
    <property type="entry name" value="Proteasome_suB-type"/>
</dbReference>
<dbReference type="NCBIfam" id="TIGR03692">
    <property type="entry name" value="ATP_dep_HslV"/>
    <property type="match status" value="1"/>
</dbReference>
<dbReference type="NCBIfam" id="NF003964">
    <property type="entry name" value="PRK05456.1"/>
    <property type="match status" value="1"/>
</dbReference>
<dbReference type="PANTHER" id="PTHR32194:SF0">
    <property type="entry name" value="ATP-DEPENDENT PROTEASE SUBUNIT HSLV"/>
    <property type="match status" value="1"/>
</dbReference>
<dbReference type="PANTHER" id="PTHR32194">
    <property type="entry name" value="METALLOPROTEASE TLDD"/>
    <property type="match status" value="1"/>
</dbReference>
<dbReference type="Pfam" id="PF00227">
    <property type="entry name" value="Proteasome"/>
    <property type="match status" value="1"/>
</dbReference>
<dbReference type="PIRSF" id="PIRSF039093">
    <property type="entry name" value="HslV"/>
    <property type="match status" value="1"/>
</dbReference>
<dbReference type="SUPFAM" id="SSF56235">
    <property type="entry name" value="N-terminal nucleophile aminohydrolases (Ntn hydrolases)"/>
    <property type="match status" value="1"/>
</dbReference>
<dbReference type="PROSITE" id="PS51476">
    <property type="entry name" value="PROTEASOME_BETA_2"/>
    <property type="match status" value="1"/>
</dbReference>
<accession>Q1LS59</accession>
<reference key="1">
    <citation type="journal article" date="2010" name="PLoS ONE">
        <title>The complete genome sequence of Cupriavidus metallidurans strain CH34, a master survivalist in harsh and anthropogenic environments.</title>
        <authorList>
            <person name="Janssen P.J."/>
            <person name="Van Houdt R."/>
            <person name="Moors H."/>
            <person name="Monsieurs P."/>
            <person name="Morin N."/>
            <person name="Michaux A."/>
            <person name="Benotmane M.A."/>
            <person name="Leys N."/>
            <person name="Vallaeys T."/>
            <person name="Lapidus A."/>
            <person name="Monchy S."/>
            <person name="Medigue C."/>
            <person name="Taghavi S."/>
            <person name="McCorkle S."/>
            <person name="Dunn J."/>
            <person name="van der Lelie D."/>
            <person name="Mergeay M."/>
        </authorList>
    </citation>
    <scope>NUCLEOTIDE SEQUENCE [LARGE SCALE GENOMIC DNA]</scope>
    <source>
        <strain>ATCC 43123 / DSM 2839 / NBRC 102507 / CH34</strain>
    </source>
</reference>
<name>HSLV_CUPMC</name>
<comment type="function">
    <text evidence="1">Protease subunit of a proteasome-like degradation complex believed to be a general protein degrading machinery.</text>
</comment>
<comment type="catalytic activity">
    <reaction evidence="1">
        <text>ATP-dependent cleavage of peptide bonds with broad specificity.</text>
        <dbReference type="EC" id="3.4.25.2"/>
    </reaction>
</comment>
<comment type="activity regulation">
    <text evidence="1">Allosterically activated by HslU binding.</text>
</comment>
<comment type="subunit">
    <text evidence="1">A double ring-shaped homohexamer of HslV is capped on each side by a ring-shaped HslU homohexamer. The assembly of the HslU/HslV complex is dependent on binding of ATP.</text>
</comment>
<comment type="subcellular location">
    <subcellularLocation>
        <location evidence="1">Cytoplasm</location>
    </subcellularLocation>
</comment>
<comment type="similarity">
    <text evidence="1">Belongs to the peptidase T1B family. HslV subfamily.</text>
</comment>
<proteinExistence type="inferred from homology"/>
<sequence length="178" mass="19031">MEQYHGTTIVSVRRGNQVALGGDGQVTLGNIVMKGTARKVRRIYNGKVLVGFAGSTADAFSLLDRFEAKLEKYQGNLTRAAVDLAKDWRSDRALRRLEAMLITADKDTTLVITGNGDVLDPEGGIAAIGSGGAYAQSAAKALVENTELPPKDVVEKALTIAGELCIYTNTNFVIETLD</sequence>
<keyword id="KW-0021">Allosteric enzyme</keyword>
<keyword id="KW-0963">Cytoplasm</keyword>
<keyword id="KW-0378">Hydrolase</keyword>
<keyword id="KW-0479">Metal-binding</keyword>
<keyword id="KW-0645">Protease</keyword>
<keyword id="KW-1185">Reference proteome</keyword>
<keyword id="KW-0915">Sodium</keyword>
<keyword id="KW-0888">Threonine protease</keyword>
<feature type="chain" id="PRO_1000012655" description="ATP-dependent protease subunit HslV">
    <location>
        <begin position="1"/>
        <end position="178"/>
    </location>
</feature>
<feature type="active site" evidence="1">
    <location>
        <position position="7"/>
    </location>
</feature>
<feature type="binding site" evidence="1">
    <location>
        <position position="162"/>
    </location>
    <ligand>
        <name>Na(+)</name>
        <dbReference type="ChEBI" id="CHEBI:29101"/>
    </ligand>
</feature>
<feature type="binding site" evidence="1">
    <location>
        <position position="165"/>
    </location>
    <ligand>
        <name>Na(+)</name>
        <dbReference type="ChEBI" id="CHEBI:29101"/>
    </ligand>
</feature>
<feature type="binding site" evidence="1">
    <location>
        <position position="168"/>
    </location>
    <ligand>
        <name>Na(+)</name>
        <dbReference type="ChEBI" id="CHEBI:29101"/>
    </ligand>
</feature>
<protein>
    <recommendedName>
        <fullName evidence="1">ATP-dependent protease subunit HslV</fullName>
        <ecNumber evidence="1">3.4.25.2</ecNumber>
    </recommendedName>
</protein>